<sequence>MEFDAVLLLSFGGPEGPDQVRPFLENVTRGRGVPPERLDAVAEHYMHFGGVSPINGINRALVTELRAEVGLPVYFGNRNWEPYVEDTVMAMRDNGVKRAAVFATSAWSGYSGCTQYVEDIARARRAAGPDAPELVKLRSYFDHPLFVEMFADAIAAAATTVPKDARLVFTAHSIPVAADRRCGPGLYSRQVAYAASLVAAAAGYDDYDLAWQSRSGPPQVPWLEPDVADHLETLRAGGVKAVIVCPIGFVADHIEVVWDLDSELRAQAQGAGIALARAATPNADRRFARLARGLIEELRSGGEPARVGGPDPVFGCLAGINGEPCRPPHCAARETAAQGA</sequence>
<accession>B2HPD6</accession>
<evidence type="ECO:0000255" key="1">
    <source>
        <dbReference type="HAMAP-Rule" id="MF_00323"/>
    </source>
</evidence>
<protein>
    <recommendedName>
        <fullName evidence="1">Coproporphyrin III ferrochelatase</fullName>
        <ecNumber evidence="1">4.99.1.9</ecNumber>
    </recommendedName>
</protein>
<name>CPFC_MYCMM</name>
<keyword id="KW-0963">Cytoplasm</keyword>
<keyword id="KW-0350">Heme biosynthesis</keyword>
<keyword id="KW-0408">Iron</keyword>
<keyword id="KW-0456">Lyase</keyword>
<keyword id="KW-0479">Metal-binding</keyword>
<keyword id="KW-0627">Porphyrin biosynthesis</keyword>
<keyword id="KW-1185">Reference proteome</keyword>
<organism>
    <name type="scientific">Mycobacterium marinum (strain ATCC BAA-535 / M)</name>
    <dbReference type="NCBI Taxonomy" id="216594"/>
    <lineage>
        <taxon>Bacteria</taxon>
        <taxon>Bacillati</taxon>
        <taxon>Actinomycetota</taxon>
        <taxon>Actinomycetes</taxon>
        <taxon>Mycobacteriales</taxon>
        <taxon>Mycobacteriaceae</taxon>
        <taxon>Mycobacterium</taxon>
        <taxon>Mycobacterium ulcerans group</taxon>
    </lineage>
</organism>
<comment type="function">
    <text evidence="1">Involved in coproporphyrin-dependent heme b biosynthesis. Catalyzes the insertion of ferrous iron into coproporphyrin III to form Fe-coproporphyrin III.</text>
</comment>
<comment type="catalytic activity">
    <reaction evidence="1">
        <text>Fe-coproporphyrin III + 2 H(+) = coproporphyrin III + Fe(2+)</text>
        <dbReference type="Rhea" id="RHEA:49572"/>
        <dbReference type="ChEBI" id="CHEBI:15378"/>
        <dbReference type="ChEBI" id="CHEBI:29033"/>
        <dbReference type="ChEBI" id="CHEBI:68438"/>
        <dbReference type="ChEBI" id="CHEBI:131725"/>
        <dbReference type="EC" id="4.99.1.9"/>
    </reaction>
    <physiologicalReaction direction="right-to-left" evidence="1">
        <dbReference type="Rhea" id="RHEA:49574"/>
    </physiologicalReaction>
</comment>
<comment type="pathway">
    <text evidence="1">Porphyrin-containing compound metabolism; protoheme biosynthesis.</text>
</comment>
<comment type="subcellular location">
    <subcellularLocation>
        <location evidence="1">Cytoplasm</location>
    </subcellularLocation>
</comment>
<comment type="similarity">
    <text evidence="1">Belongs to the ferrochelatase family.</text>
</comment>
<gene>
    <name evidence="1" type="primary">cpfC</name>
    <name type="ordered locus">MMAR_2291</name>
</gene>
<proteinExistence type="inferred from homology"/>
<dbReference type="EC" id="4.99.1.9" evidence="1"/>
<dbReference type="EMBL" id="CP000854">
    <property type="protein sequence ID" value="ACC40740.1"/>
    <property type="molecule type" value="Genomic_DNA"/>
</dbReference>
<dbReference type="RefSeq" id="WP_012394042.1">
    <property type="nucleotide sequence ID" value="NC_010612.1"/>
</dbReference>
<dbReference type="SMR" id="B2HPD6"/>
<dbReference type="STRING" id="216594.MMAR_2291"/>
<dbReference type="KEGG" id="mmi:MMAR_2291"/>
<dbReference type="eggNOG" id="COG0276">
    <property type="taxonomic scope" value="Bacteria"/>
</dbReference>
<dbReference type="HOGENOM" id="CLU_018884_2_0_11"/>
<dbReference type="OrthoDB" id="9776380at2"/>
<dbReference type="UniPathway" id="UPA00252"/>
<dbReference type="Proteomes" id="UP000001190">
    <property type="component" value="Chromosome"/>
</dbReference>
<dbReference type="GO" id="GO:0005737">
    <property type="term" value="C:cytoplasm"/>
    <property type="evidence" value="ECO:0007669"/>
    <property type="project" value="UniProtKB-SubCell"/>
</dbReference>
<dbReference type="GO" id="GO:0004325">
    <property type="term" value="F:ferrochelatase activity"/>
    <property type="evidence" value="ECO:0007669"/>
    <property type="project" value="UniProtKB-UniRule"/>
</dbReference>
<dbReference type="GO" id="GO:0046872">
    <property type="term" value="F:metal ion binding"/>
    <property type="evidence" value="ECO:0007669"/>
    <property type="project" value="UniProtKB-KW"/>
</dbReference>
<dbReference type="GO" id="GO:0006783">
    <property type="term" value="P:heme biosynthetic process"/>
    <property type="evidence" value="ECO:0007669"/>
    <property type="project" value="UniProtKB-UniRule"/>
</dbReference>
<dbReference type="CDD" id="cd00419">
    <property type="entry name" value="Ferrochelatase_C"/>
    <property type="match status" value="1"/>
</dbReference>
<dbReference type="CDD" id="cd03411">
    <property type="entry name" value="Ferrochelatase_N"/>
    <property type="match status" value="1"/>
</dbReference>
<dbReference type="Gene3D" id="3.40.50.1400">
    <property type="match status" value="2"/>
</dbReference>
<dbReference type="HAMAP" id="MF_00323">
    <property type="entry name" value="Ferrochelatase"/>
    <property type="match status" value="1"/>
</dbReference>
<dbReference type="InterPro" id="IPR001015">
    <property type="entry name" value="Ferrochelatase"/>
</dbReference>
<dbReference type="InterPro" id="IPR019772">
    <property type="entry name" value="Ferrochelatase_AS"/>
</dbReference>
<dbReference type="InterPro" id="IPR033644">
    <property type="entry name" value="Ferrochelatase_C"/>
</dbReference>
<dbReference type="InterPro" id="IPR033659">
    <property type="entry name" value="Ferrochelatase_N"/>
</dbReference>
<dbReference type="NCBIfam" id="TIGR00109">
    <property type="entry name" value="hemH"/>
    <property type="match status" value="1"/>
</dbReference>
<dbReference type="NCBIfam" id="NF000689">
    <property type="entry name" value="PRK00035.2-1"/>
    <property type="match status" value="1"/>
</dbReference>
<dbReference type="PANTHER" id="PTHR11108">
    <property type="entry name" value="FERROCHELATASE"/>
    <property type="match status" value="1"/>
</dbReference>
<dbReference type="PANTHER" id="PTHR11108:SF1">
    <property type="entry name" value="FERROCHELATASE, MITOCHONDRIAL"/>
    <property type="match status" value="1"/>
</dbReference>
<dbReference type="Pfam" id="PF00762">
    <property type="entry name" value="Ferrochelatase"/>
    <property type="match status" value="1"/>
</dbReference>
<dbReference type="SUPFAM" id="SSF53800">
    <property type="entry name" value="Chelatase"/>
    <property type="match status" value="1"/>
</dbReference>
<dbReference type="PROSITE" id="PS00534">
    <property type="entry name" value="FERROCHELATASE"/>
    <property type="match status" value="1"/>
</dbReference>
<feature type="chain" id="PRO_1000116061" description="Coproporphyrin III ferrochelatase">
    <location>
        <begin position="1"/>
        <end position="340"/>
    </location>
</feature>
<feature type="binding site" evidence="1">
    <location>
        <position position="52"/>
    </location>
    <ligand>
        <name>Fe-coproporphyrin III</name>
        <dbReference type="ChEBI" id="CHEBI:68438"/>
    </ligand>
</feature>
<feature type="binding site" evidence="1">
    <location>
        <position position="116"/>
    </location>
    <ligand>
        <name>Fe-coproporphyrin III</name>
        <dbReference type="ChEBI" id="CHEBI:68438"/>
    </ligand>
</feature>
<feature type="binding site" evidence="1">
    <location>
        <position position="172"/>
    </location>
    <ligand>
        <name>Fe(2+)</name>
        <dbReference type="ChEBI" id="CHEBI:29033"/>
    </ligand>
</feature>
<feature type="binding site" evidence="1">
    <location>
        <position position="255"/>
    </location>
    <ligand>
        <name>Fe(2+)</name>
        <dbReference type="ChEBI" id="CHEBI:29033"/>
    </ligand>
</feature>
<reference key="1">
    <citation type="journal article" date="2008" name="Genome Res.">
        <title>Insights from the complete genome sequence of Mycobacterium marinum on the evolution of Mycobacterium tuberculosis.</title>
        <authorList>
            <person name="Stinear T.P."/>
            <person name="Seemann T."/>
            <person name="Harrison P.F."/>
            <person name="Jenkin G.A."/>
            <person name="Davies J.K."/>
            <person name="Johnson P.D."/>
            <person name="Abdellah Z."/>
            <person name="Arrowsmith C."/>
            <person name="Chillingworth T."/>
            <person name="Churcher C."/>
            <person name="Clarke K."/>
            <person name="Cronin A."/>
            <person name="Davis P."/>
            <person name="Goodhead I."/>
            <person name="Holroyd N."/>
            <person name="Jagels K."/>
            <person name="Lord A."/>
            <person name="Moule S."/>
            <person name="Mungall K."/>
            <person name="Norbertczak H."/>
            <person name="Quail M.A."/>
            <person name="Rabbinowitsch E."/>
            <person name="Walker D."/>
            <person name="White B."/>
            <person name="Whitehead S."/>
            <person name="Small P.L."/>
            <person name="Brosch R."/>
            <person name="Ramakrishnan L."/>
            <person name="Fischbach M.A."/>
            <person name="Parkhill J."/>
            <person name="Cole S.T."/>
        </authorList>
    </citation>
    <scope>NUCLEOTIDE SEQUENCE [LARGE SCALE GENOMIC DNA]</scope>
    <source>
        <strain>ATCC BAA-535 / M</strain>
    </source>
</reference>